<evidence type="ECO:0000305" key="1"/>
<gene>
    <name type="ordered locus">Cgl2031</name>
    <name type="ordered locus">cg2228</name>
</gene>
<reference key="1">
    <citation type="journal article" date="2003" name="Appl. Microbiol. Biotechnol.">
        <title>The Corynebacterium glutamicum genome: features and impacts on biotechnological processes.</title>
        <authorList>
            <person name="Ikeda M."/>
            <person name="Nakagawa S."/>
        </authorList>
    </citation>
    <scope>NUCLEOTIDE SEQUENCE [LARGE SCALE GENOMIC DNA]</scope>
    <source>
        <strain>ATCC 13032 / DSM 20300 / JCM 1318 / BCRC 11384 / CCUG 27702 / LMG 3730 / NBRC 12168 / NCIMB 10025 / NRRL B-2784 / 534</strain>
    </source>
</reference>
<reference key="2">
    <citation type="journal article" date="2003" name="J. Biotechnol.">
        <title>The complete Corynebacterium glutamicum ATCC 13032 genome sequence and its impact on the production of L-aspartate-derived amino acids and vitamins.</title>
        <authorList>
            <person name="Kalinowski J."/>
            <person name="Bathe B."/>
            <person name="Bartels D."/>
            <person name="Bischoff N."/>
            <person name="Bott M."/>
            <person name="Burkovski A."/>
            <person name="Dusch N."/>
            <person name="Eggeling L."/>
            <person name="Eikmanns B.J."/>
            <person name="Gaigalat L."/>
            <person name="Goesmann A."/>
            <person name="Hartmann M."/>
            <person name="Huthmacher K."/>
            <person name="Kraemer R."/>
            <person name="Linke B."/>
            <person name="McHardy A.C."/>
            <person name="Meyer F."/>
            <person name="Moeckel B."/>
            <person name="Pfefferle W."/>
            <person name="Puehler A."/>
            <person name="Rey D.A."/>
            <person name="Rueckert C."/>
            <person name="Rupp O."/>
            <person name="Sahm H."/>
            <person name="Wendisch V.F."/>
            <person name="Wiegraebe I."/>
            <person name="Tauch A."/>
        </authorList>
    </citation>
    <scope>NUCLEOTIDE SEQUENCE [LARGE SCALE GENOMIC DNA]</scope>
    <source>
        <strain>ATCC 13032 / DSM 20300 / JCM 1318 / BCRC 11384 / CCUG 27702 / LMG 3730 / NBRC 12168 / NCIMB 10025 / NRRL B-2784 / 534</strain>
    </source>
</reference>
<proteinExistence type="inferred from homology"/>
<accession>Q8NNZ6</accession>
<feature type="chain" id="PRO_0000167346" description="UPF0102 protein Cgl2031/cg2228">
    <location>
        <begin position="1"/>
        <end position="122"/>
    </location>
</feature>
<name>Y2031_CORGL</name>
<organism>
    <name type="scientific">Corynebacterium glutamicum (strain ATCC 13032 / DSM 20300 / JCM 1318 / BCRC 11384 / CCUG 27702 / LMG 3730 / NBRC 12168 / NCIMB 10025 / NRRL B-2784 / 534)</name>
    <dbReference type="NCBI Taxonomy" id="196627"/>
    <lineage>
        <taxon>Bacteria</taxon>
        <taxon>Bacillati</taxon>
        <taxon>Actinomycetota</taxon>
        <taxon>Actinomycetes</taxon>
        <taxon>Mycobacteriales</taxon>
        <taxon>Corynebacteriaceae</taxon>
        <taxon>Corynebacterium</taxon>
    </lineage>
</organism>
<comment type="similarity">
    <text evidence="1">Belongs to the UPF0102 family.</text>
</comment>
<dbReference type="EMBL" id="BA000036">
    <property type="protein sequence ID" value="BAB99424.1"/>
    <property type="molecule type" value="Genomic_DNA"/>
</dbReference>
<dbReference type="EMBL" id="BX927154">
    <property type="protein sequence ID" value="CAF20371.1"/>
    <property type="molecule type" value="Genomic_DNA"/>
</dbReference>
<dbReference type="RefSeq" id="NP_601236.1">
    <property type="nucleotide sequence ID" value="NC_003450.3"/>
</dbReference>
<dbReference type="RefSeq" id="WP_011014835.1">
    <property type="nucleotide sequence ID" value="NC_006958.1"/>
</dbReference>
<dbReference type="SMR" id="Q8NNZ6"/>
<dbReference type="STRING" id="196627.cg2228"/>
<dbReference type="KEGG" id="cgb:cg2228"/>
<dbReference type="KEGG" id="cgl:Cgl2031"/>
<dbReference type="PATRIC" id="fig|196627.13.peg.1969"/>
<dbReference type="eggNOG" id="COG0792">
    <property type="taxonomic scope" value="Bacteria"/>
</dbReference>
<dbReference type="HOGENOM" id="CLU_115353_2_2_11"/>
<dbReference type="OrthoDB" id="9794876at2"/>
<dbReference type="BioCyc" id="CORYNE:G18NG-11623-MONOMER"/>
<dbReference type="Proteomes" id="UP000000582">
    <property type="component" value="Chromosome"/>
</dbReference>
<dbReference type="Proteomes" id="UP000001009">
    <property type="component" value="Chromosome"/>
</dbReference>
<dbReference type="GO" id="GO:0003676">
    <property type="term" value="F:nucleic acid binding"/>
    <property type="evidence" value="ECO:0007669"/>
    <property type="project" value="InterPro"/>
</dbReference>
<dbReference type="Gene3D" id="3.40.1350.10">
    <property type="match status" value="1"/>
</dbReference>
<dbReference type="HAMAP" id="MF_00048">
    <property type="entry name" value="UPF0102"/>
    <property type="match status" value="1"/>
</dbReference>
<dbReference type="InterPro" id="IPR011335">
    <property type="entry name" value="Restrct_endonuc-II-like"/>
</dbReference>
<dbReference type="InterPro" id="IPR011856">
    <property type="entry name" value="tRNA_endonuc-like_dom_sf"/>
</dbReference>
<dbReference type="InterPro" id="IPR003509">
    <property type="entry name" value="UPF0102_YraN-like"/>
</dbReference>
<dbReference type="NCBIfam" id="NF009154">
    <property type="entry name" value="PRK12497.3-3"/>
    <property type="match status" value="1"/>
</dbReference>
<dbReference type="PANTHER" id="PTHR34039">
    <property type="entry name" value="UPF0102 PROTEIN YRAN"/>
    <property type="match status" value="1"/>
</dbReference>
<dbReference type="PANTHER" id="PTHR34039:SF1">
    <property type="entry name" value="UPF0102 PROTEIN YRAN"/>
    <property type="match status" value="1"/>
</dbReference>
<dbReference type="Pfam" id="PF02021">
    <property type="entry name" value="UPF0102"/>
    <property type="match status" value="1"/>
</dbReference>
<dbReference type="SUPFAM" id="SSF52980">
    <property type="entry name" value="Restriction endonuclease-like"/>
    <property type="match status" value="1"/>
</dbReference>
<sequence>MKTQKQYLGAFGEDVALQQYLDDQATLLDRNVRYSCGELDLIVRSASGVVVFVEVKTRRGSAFDSAAAVNNQKMLRMRRAAALWLEGKPYTPIRFDVVAIVLDPHTGRPEITVYEDVEHGAR</sequence>
<protein>
    <recommendedName>
        <fullName>UPF0102 protein Cgl2031/cg2228</fullName>
    </recommendedName>
</protein>
<keyword id="KW-1185">Reference proteome</keyword>